<proteinExistence type="inferred from homology"/>
<comment type="function">
    <text evidence="1">Involved in the restart of stalled replication forks, which reloads the replicative helicase on sites other than the origin of replication; the PriA-PriB pathway is the major replication restart pathway. During primosome assembly it facilitates complex formation between PriA and DnaT on DNA; stabilizes PriA on DNA. Stimulates the DNA unwinding activity of PriA helicase.</text>
</comment>
<comment type="subunit">
    <text evidence="1">Homodimer. Interacts with PriA and DnaT. Component of the replication restart primosome. Primosome assembly occurs via a 'hand-off' mechanism. PriA binds to replication forks, subsequently PriB then DnaT bind; DnaT then displaces ssDNA to generate the helicase loading substrate.</text>
</comment>
<comment type="similarity">
    <text evidence="1">Belongs to the PriB family.</text>
</comment>
<gene>
    <name evidence="1" type="primary">priB</name>
    <name type="ordered locus">Ecok1_42520</name>
    <name type="ORF">APECO1_2191</name>
</gene>
<protein>
    <recommendedName>
        <fullName evidence="1">Replication restart protein PriB</fullName>
    </recommendedName>
</protein>
<organism>
    <name type="scientific">Escherichia coli O1:K1 / APEC</name>
    <dbReference type="NCBI Taxonomy" id="405955"/>
    <lineage>
        <taxon>Bacteria</taxon>
        <taxon>Pseudomonadati</taxon>
        <taxon>Pseudomonadota</taxon>
        <taxon>Gammaproteobacteria</taxon>
        <taxon>Enterobacterales</taxon>
        <taxon>Enterobacteriaceae</taxon>
        <taxon>Escherichia</taxon>
    </lineage>
</organism>
<keyword id="KW-0235">DNA replication</keyword>
<keyword id="KW-0238">DNA-binding</keyword>
<keyword id="KW-0639">Primosome</keyword>
<keyword id="KW-1185">Reference proteome</keyword>
<sequence>MTNRLVLSGTVCRTPLRKVSPSGIPHCQFVLEHRSVQEEAGFHRQAWCQMPVIVSGHENQAITHSITVGSRITVQGFISCHKAKNGLSKMVLHAEQIELIDSGD</sequence>
<reference key="1">
    <citation type="journal article" date="2007" name="J. Bacteriol.">
        <title>The genome sequence of avian pathogenic Escherichia coli strain O1:K1:H7 shares strong similarities with human extraintestinal pathogenic E. coli genomes.</title>
        <authorList>
            <person name="Johnson T.J."/>
            <person name="Kariyawasam S."/>
            <person name="Wannemuehler Y."/>
            <person name="Mangiamele P."/>
            <person name="Johnson S.J."/>
            <person name="Doetkott C."/>
            <person name="Skyberg J.A."/>
            <person name="Lynne A.M."/>
            <person name="Johnson J.R."/>
            <person name="Nolan L.K."/>
        </authorList>
    </citation>
    <scope>NUCLEOTIDE SEQUENCE [LARGE SCALE GENOMIC DNA]</scope>
</reference>
<evidence type="ECO:0000255" key="1">
    <source>
        <dbReference type="HAMAP-Rule" id="MF_00720"/>
    </source>
</evidence>
<name>PRIB_ECOK1</name>
<accession>A1AJA6</accession>
<feature type="chain" id="PRO_1000083275" description="Replication restart protein PriB">
    <location>
        <begin position="1"/>
        <end position="104"/>
    </location>
</feature>
<feature type="domain" description="SSB" evidence="1">
    <location>
        <begin position="1"/>
        <end position="101"/>
    </location>
</feature>
<dbReference type="EMBL" id="CP000468">
    <property type="protein sequence ID" value="ABJ03746.1"/>
    <property type="molecule type" value="Genomic_DNA"/>
</dbReference>
<dbReference type="RefSeq" id="WP_001296681.1">
    <property type="nucleotide sequence ID" value="NZ_CADILS010000035.1"/>
</dbReference>
<dbReference type="SMR" id="A1AJA6"/>
<dbReference type="GeneID" id="93777622"/>
<dbReference type="KEGG" id="ecv:APECO1_2191"/>
<dbReference type="HOGENOM" id="CLU_166075_0_0_6"/>
<dbReference type="Proteomes" id="UP000008216">
    <property type="component" value="Chromosome"/>
</dbReference>
<dbReference type="GO" id="GO:1990077">
    <property type="term" value="C:primosome complex"/>
    <property type="evidence" value="ECO:0007669"/>
    <property type="project" value="UniProtKB-KW"/>
</dbReference>
<dbReference type="GO" id="GO:0003697">
    <property type="term" value="F:single-stranded DNA binding"/>
    <property type="evidence" value="ECO:0007669"/>
    <property type="project" value="UniProtKB-UniRule"/>
</dbReference>
<dbReference type="GO" id="GO:0006269">
    <property type="term" value="P:DNA replication, synthesis of primer"/>
    <property type="evidence" value="ECO:0007669"/>
    <property type="project" value="UniProtKB-KW"/>
</dbReference>
<dbReference type="CDD" id="cd04496">
    <property type="entry name" value="SSB_OBF"/>
    <property type="match status" value="1"/>
</dbReference>
<dbReference type="FunFam" id="2.40.50.140:FF:000077">
    <property type="entry name" value="Primosomal replication protein N"/>
    <property type="match status" value="1"/>
</dbReference>
<dbReference type="Gene3D" id="2.40.50.140">
    <property type="entry name" value="Nucleic acid-binding proteins"/>
    <property type="match status" value="1"/>
</dbReference>
<dbReference type="HAMAP" id="MF_00720">
    <property type="entry name" value="PriB"/>
    <property type="match status" value="1"/>
</dbReference>
<dbReference type="InterPro" id="IPR012340">
    <property type="entry name" value="NA-bd_OB-fold"/>
</dbReference>
<dbReference type="InterPro" id="IPR000424">
    <property type="entry name" value="Primosome_PriB/ssb"/>
</dbReference>
<dbReference type="InterPro" id="IPR023646">
    <property type="entry name" value="Prisomal_replication_PriB"/>
</dbReference>
<dbReference type="NCBIfam" id="TIGR04418">
    <property type="entry name" value="PriB_gamma"/>
    <property type="match status" value="1"/>
</dbReference>
<dbReference type="Pfam" id="PF22657">
    <property type="entry name" value="SSB_1"/>
    <property type="match status" value="1"/>
</dbReference>
<dbReference type="PIRSF" id="PIRSF003135">
    <property type="entry name" value="Primosomal_n"/>
    <property type="match status" value="1"/>
</dbReference>
<dbReference type="SUPFAM" id="SSF50249">
    <property type="entry name" value="Nucleic acid-binding proteins"/>
    <property type="match status" value="1"/>
</dbReference>
<dbReference type="PROSITE" id="PS50935">
    <property type="entry name" value="SSB"/>
    <property type="match status" value="1"/>
</dbReference>